<evidence type="ECO:0000255" key="1">
    <source>
        <dbReference type="HAMAP-Rule" id="MF_00392"/>
    </source>
</evidence>
<keyword id="KW-0328">Glycosyltransferase</keyword>
<keyword id="KW-0441">Lipid A biosynthesis</keyword>
<keyword id="KW-0444">Lipid biosynthesis</keyword>
<keyword id="KW-0443">Lipid metabolism</keyword>
<keyword id="KW-0808">Transferase</keyword>
<feature type="chain" id="PRO_1000049402" description="Lipid-A-disaccharide synthase">
    <location>
        <begin position="1"/>
        <end position="360"/>
    </location>
</feature>
<name>LPXB_HELAH</name>
<comment type="function">
    <text evidence="1">Condensation of UDP-2,3-diacylglucosamine and 2,3-diacylglucosamine-1-phosphate to form lipid A disaccharide, a precursor of lipid A, a phosphorylated glycolipid that anchors the lipopolysaccharide to the outer membrane of the cell.</text>
</comment>
<comment type="catalytic activity">
    <reaction evidence="1">
        <text>a lipid X + a UDP-2-N,3-O-bis[(3R)-3-hydroxyacyl]-alpha-D-glucosamine = a lipid A disaccharide + UDP + H(+)</text>
        <dbReference type="Rhea" id="RHEA:67828"/>
        <dbReference type="ChEBI" id="CHEBI:15378"/>
        <dbReference type="ChEBI" id="CHEBI:58223"/>
        <dbReference type="ChEBI" id="CHEBI:137748"/>
        <dbReference type="ChEBI" id="CHEBI:176338"/>
        <dbReference type="ChEBI" id="CHEBI:176343"/>
        <dbReference type="EC" id="2.4.1.182"/>
    </reaction>
</comment>
<comment type="pathway">
    <text evidence="1">Bacterial outer membrane biogenesis; LPS lipid A biosynthesis.</text>
</comment>
<comment type="similarity">
    <text evidence="1">Belongs to the LpxB family.</text>
</comment>
<reference key="1">
    <citation type="journal article" date="2006" name="PLoS Genet.">
        <title>Who ate whom? Adaptive Helicobacter genomic changes that accompanied a host jump from early humans to large felines.</title>
        <authorList>
            <person name="Eppinger M."/>
            <person name="Baar C."/>
            <person name="Linz B."/>
            <person name="Raddatz G."/>
            <person name="Lanz C."/>
            <person name="Keller H."/>
            <person name="Morelli G."/>
            <person name="Gressmann H."/>
            <person name="Achtman M."/>
            <person name="Schuster S.C."/>
        </authorList>
    </citation>
    <scope>NUCLEOTIDE SEQUENCE [LARGE SCALE GENOMIC DNA]</scope>
    <source>
        <strain>Sheeba</strain>
    </source>
</reference>
<dbReference type="EC" id="2.4.1.182" evidence="1"/>
<dbReference type="EMBL" id="AM260522">
    <property type="protein sequence ID" value="CAJ99984.1"/>
    <property type="molecule type" value="Genomic_DNA"/>
</dbReference>
<dbReference type="RefSeq" id="WP_011578091.1">
    <property type="nucleotide sequence ID" value="NC_008229.1"/>
</dbReference>
<dbReference type="SMR" id="Q17WJ2"/>
<dbReference type="STRING" id="382638.Hac_1230"/>
<dbReference type="CAZy" id="GT19">
    <property type="family name" value="Glycosyltransferase Family 19"/>
</dbReference>
<dbReference type="GeneID" id="31758576"/>
<dbReference type="KEGG" id="hac:Hac_1230"/>
<dbReference type="eggNOG" id="COG0763">
    <property type="taxonomic scope" value="Bacteria"/>
</dbReference>
<dbReference type="HOGENOM" id="CLU_036577_3_1_7"/>
<dbReference type="OrthoDB" id="9801642at2"/>
<dbReference type="BioCyc" id="HACI382638:HAC_RS05320-MONOMER"/>
<dbReference type="UniPathway" id="UPA00973"/>
<dbReference type="Proteomes" id="UP000000775">
    <property type="component" value="Chromosome"/>
</dbReference>
<dbReference type="GO" id="GO:0016020">
    <property type="term" value="C:membrane"/>
    <property type="evidence" value="ECO:0007669"/>
    <property type="project" value="GOC"/>
</dbReference>
<dbReference type="GO" id="GO:0008915">
    <property type="term" value="F:lipid-A-disaccharide synthase activity"/>
    <property type="evidence" value="ECO:0007669"/>
    <property type="project" value="UniProtKB-UniRule"/>
</dbReference>
<dbReference type="GO" id="GO:0005543">
    <property type="term" value="F:phospholipid binding"/>
    <property type="evidence" value="ECO:0007669"/>
    <property type="project" value="TreeGrafter"/>
</dbReference>
<dbReference type="GO" id="GO:0009245">
    <property type="term" value="P:lipid A biosynthetic process"/>
    <property type="evidence" value="ECO:0007669"/>
    <property type="project" value="UniProtKB-UniRule"/>
</dbReference>
<dbReference type="HAMAP" id="MF_00392">
    <property type="entry name" value="LpxB"/>
    <property type="match status" value="1"/>
</dbReference>
<dbReference type="InterPro" id="IPR003835">
    <property type="entry name" value="Glyco_trans_19"/>
</dbReference>
<dbReference type="NCBIfam" id="TIGR00215">
    <property type="entry name" value="lpxB"/>
    <property type="match status" value="1"/>
</dbReference>
<dbReference type="PANTHER" id="PTHR30372">
    <property type="entry name" value="LIPID-A-DISACCHARIDE SYNTHASE"/>
    <property type="match status" value="1"/>
</dbReference>
<dbReference type="PANTHER" id="PTHR30372:SF4">
    <property type="entry name" value="LIPID-A-DISACCHARIDE SYNTHASE, MITOCHONDRIAL-RELATED"/>
    <property type="match status" value="1"/>
</dbReference>
<dbReference type="Pfam" id="PF02684">
    <property type="entry name" value="LpxB"/>
    <property type="match status" value="1"/>
</dbReference>
<dbReference type="SUPFAM" id="SSF53756">
    <property type="entry name" value="UDP-Glycosyltransferase/glycogen phosphorylase"/>
    <property type="match status" value="1"/>
</dbReference>
<proteinExistence type="inferred from homology"/>
<organism>
    <name type="scientific">Helicobacter acinonychis (strain Sheeba)</name>
    <dbReference type="NCBI Taxonomy" id="382638"/>
    <lineage>
        <taxon>Bacteria</taxon>
        <taxon>Pseudomonadati</taxon>
        <taxon>Campylobacterota</taxon>
        <taxon>Epsilonproteobacteria</taxon>
        <taxon>Campylobacterales</taxon>
        <taxon>Helicobacteraceae</taxon>
        <taxon>Helicobacter</taxon>
    </lineage>
</organism>
<gene>
    <name evidence="1" type="primary">lpxB</name>
    <name type="ordered locus">Hac_1230</name>
</gene>
<sequence>MPTILVSALETSSNVHLEELRRNLPKDYRFIGVFEGSGALYSPREFSVMGFRDVIGRLGFLFKVYKEMIQLAKQADMVLLMDSSSFNIPLAKKIKKQDSHKKIMYYILPQVWAWKKWRAKTLEKYCDFLGAILPFEVSYYQKKAQYVGHPLLDEIKYYKKDIKGETLVFMPGSRKSEIAKIFPLFVEVARILEQNEGFKRRVLVVPSFFKGLDLKALYGEGIEWFEISYDAHKSLFEAEFAFICSGTATLEAALIGTPFVLAYRAKTMDFLIARMFVNLHYIGLANIFYNALNDETPGLGESQLHPELIQHFLSVESLIRAYKDMDRERYFKESLKLREYLMHGSARKIASEIAFLLNLT</sequence>
<accession>Q17WJ2</accession>
<protein>
    <recommendedName>
        <fullName evidence="1">Lipid-A-disaccharide synthase</fullName>
        <ecNumber evidence="1">2.4.1.182</ecNumber>
    </recommendedName>
</protein>